<name>VE6_HPV30</name>
<proteinExistence type="inferred from homology"/>
<evidence type="ECO:0000255" key="1">
    <source>
        <dbReference type="HAMAP-Rule" id="MF_04006"/>
    </source>
</evidence>
<evidence type="ECO:0000305" key="2"/>
<keyword id="KW-0010">Activator</keyword>
<keyword id="KW-0238">DNA-binding</keyword>
<keyword id="KW-0244">Early protein</keyword>
<keyword id="KW-1035">Host cytoplasm</keyword>
<keyword id="KW-1048">Host nucleus</keyword>
<keyword id="KW-0945">Host-virus interaction</keyword>
<keyword id="KW-1090">Inhibition of host innate immune response by virus</keyword>
<keyword id="KW-1092">Inhibition of host IRF3 by virus</keyword>
<keyword id="KW-1113">Inhibition of host RLR pathway by virus</keyword>
<keyword id="KW-0479">Metal-binding</keyword>
<keyword id="KW-1119">Modulation of host cell apoptosis by virus</keyword>
<keyword id="KW-0553">Oncogene</keyword>
<keyword id="KW-1185">Reference proteome</keyword>
<keyword id="KW-0804">Transcription</keyword>
<keyword id="KW-0805">Transcription regulation</keyword>
<keyword id="KW-0899">Viral immunoevasion</keyword>
<keyword id="KW-0862">Zinc</keyword>
<keyword id="KW-0863">Zinc-finger</keyword>
<reference key="1">
    <citation type="journal article" date="1994" name="Curr. Top. Microbiol. Immunol.">
        <title>Primer-directed sequencing of human papillomavirus types.</title>
        <authorList>
            <person name="Delius H."/>
            <person name="Hofmann B."/>
        </authorList>
    </citation>
    <scope>NUCLEOTIDE SEQUENCE [GENOMIC DNA]</scope>
</reference>
<feature type="chain" id="PRO_0000133350" description="Protein E6">
    <location>
        <begin position="1"/>
        <end position="153"/>
    </location>
</feature>
<feature type="zinc finger region" evidence="1">
    <location>
        <begin position="33"/>
        <end position="69"/>
    </location>
</feature>
<feature type="zinc finger region" evidence="1">
    <location>
        <begin position="106"/>
        <end position="142"/>
    </location>
</feature>
<feature type="short sequence motif" description="PDZ-binding domain" evidence="1">
    <location>
        <begin position="151"/>
        <end position="153"/>
    </location>
</feature>
<accession>P36809</accession>
<gene>
    <name evidence="1" type="primary">E6</name>
</gene>
<dbReference type="EMBL" id="X74474">
    <property type="protein sequence ID" value="CAA52543.1"/>
    <property type="molecule type" value="Genomic_DNA"/>
</dbReference>
<dbReference type="PIR" id="S36503">
    <property type="entry name" value="S36503"/>
</dbReference>
<dbReference type="RefSeq" id="YP_009508154.1">
    <property type="nucleotide sequence ID" value="NC_038889.1"/>
</dbReference>
<dbReference type="SMR" id="P36809"/>
<dbReference type="GeneID" id="37619473"/>
<dbReference type="OrthoDB" id="27353at10239"/>
<dbReference type="Proteomes" id="UP000009155">
    <property type="component" value="Genome"/>
</dbReference>
<dbReference type="GO" id="GO:0030430">
    <property type="term" value="C:host cell cytoplasm"/>
    <property type="evidence" value="ECO:0007669"/>
    <property type="project" value="UniProtKB-SubCell"/>
</dbReference>
<dbReference type="GO" id="GO:0042025">
    <property type="term" value="C:host cell nucleus"/>
    <property type="evidence" value="ECO:0007669"/>
    <property type="project" value="UniProtKB-SubCell"/>
</dbReference>
<dbReference type="GO" id="GO:0003677">
    <property type="term" value="F:DNA binding"/>
    <property type="evidence" value="ECO:0007669"/>
    <property type="project" value="UniProtKB-UniRule"/>
</dbReference>
<dbReference type="GO" id="GO:0030165">
    <property type="term" value="F:PDZ domain binding"/>
    <property type="evidence" value="ECO:0007669"/>
    <property type="project" value="UniProtKB-UniRule"/>
</dbReference>
<dbReference type="GO" id="GO:0008270">
    <property type="term" value="F:zinc ion binding"/>
    <property type="evidence" value="ECO:0007669"/>
    <property type="project" value="UniProtKB-KW"/>
</dbReference>
<dbReference type="GO" id="GO:0006351">
    <property type="term" value="P:DNA-templated transcription"/>
    <property type="evidence" value="ECO:0007669"/>
    <property type="project" value="UniProtKB-UniRule"/>
</dbReference>
<dbReference type="GO" id="GO:0006355">
    <property type="term" value="P:regulation of DNA-templated transcription"/>
    <property type="evidence" value="ECO:0007669"/>
    <property type="project" value="UniProtKB-UniRule"/>
</dbReference>
<dbReference type="GO" id="GO:0052150">
    <property type="term" value="P:symbiont-mediated perturbation of host apoptosis"/>
    <property type="evidence" value="ECO:0007669"/>
    <property type="project" value="UniProtKB-KW"/>
</dbReference>
<dbReference type="GO" id="GO:0039648">
    <property type="term" value="P:symbiont-mediated perturbation of host ubiquitin-like protein modification"/>
    <property type="evidence" value="ECO:0007669"/>
    <property type="project" value="UniProtKB-UniRule"/>
</dbReference>
<dbReference type="GO" id="GO:0039548">
    <property type="term" value="P:symbiont-mediated suppression of host cytoplasmic pattern recognition receptor signaling pathway via inhibition of IRF3 activity"/>
    <property type="evidence" value="ECO:0007669"/>
    <property type="project" value="UniProtKB-UniRule"/>
</dbReference>
<dbReference type="GO" id="GO:0039502">
    <property type="term" value="P:symbiont-mediated suppression of host type I interferon-mediated signaling pathway"/>
    <property type="evidence" value="ECO:0007669"/>
    <property type="project" value="UniProtKB-UniRule"/>
</dbReference>
<dbReference type="Gene3D" id="3.30.240.40">
    <property type="entry name" value="E6 early regulatory protein"/>
    <property type="match status" value="2"/>
</dbReference>
<dbReference type="HAMAP" id="MF_04006">
    <property type="entry name" value="HPV_E6"/>
    <property type="match status" value="1"/>
</dbReference>
<dbReference type="InterPro" id="IPR001334">
    <property type="entry name" value="E6"/>
</dbReference>
<dbReference type="InterPro" id="IPR038575">
    <property type="entry name" value="E6_sf"/>
</dbReference>
<dbReference type="Pfam" id="PF00518">
    <property type="entry name" value="E6"/>
    <property type="match status" value="1"/>
</dbReference>
<dbReference type="SUPFAM" id="SSF161229">
    <property type="entry name" value="E6 C-terminal domain-like"/>
    <property type="match status" value="2"/>
</dbReference>
<protein>
    <recommendedName>
        <fullName evidence="1">Protein E6</fullName>
    </recommendedName>
</protein>
<organismHost>
    <name type="scientific">Homo sapiens</name>
    <name type="common">Human</name>
    <dbReference type="NCBI Taxonomy" id="9606"/>
</organismHost>
<sequence>MAFKFENTGERPRTVHHLCEVQETSLLELQLQCVYCKKELSSSEVYNFACKDLRLVYREDSPYAVCNFCLLFYSKVRKIRHYNYSLYGASLVALTKKELFDLLIRCYRCQQPLTPEEKQLHCEYKKRFHRISRTWTGLCLQCWRHTTSTETAV</sequence>
<organism>
    <name type="scientific">Human papillomavirus 30</name>
    <dbReference type="NCBI Taxonomy" id="10611"/>
    <lineage>
        <taxon>Viruses</taxon>
        <taxon>Monodnaviria</taxon>
        <taxon>Shotokuvirae</taxon>
        <taxon>Cossaviricota</taxon>
        <taxon>Papovaviricetes</taxon>
        <taxon>Zurhausenvirales</taxon>
        <taxon>Papillomaviridae</taxon>
        <taxon>Firstpapillomavirinae</taxon>
        <taxon>Alphapapillomavirus</taxon>
        <taxon>Alphapapillomavirus 6</taxon>
    </lineage>
</organism>
<comment type="function">
    <text evidence="1">Plays a major role in the induction and maintenance of cellular transformation. Acts mainly as an oncoprotein by stimulating the destruction of many host cell key regulatory proteins. E6 associates with host UBE3A/E6-AP ubiquitin-protein ligase, and inactivates tumor suppressors TP53 and TP73 by targeting them to the 26S proteasome for degradation. In turn, DNA damage and chromosomal instabilities increase and lead to cell proliferation and cancer development. The complex E6/E6AP targets several other substrates to degradation via the proteasome including host DLG1 or NFX1, a repressor of human telomerase reverse transcriptase (hTERT). The resulting increased expression of hTERT prevents the shortening of telomere length leading to cell immortalization. Other cellular targets including BAK1, Fas-associated death domain-containing protein (FADD) and procaspase 8, are degraded by E6/E6AP causing inhibition of apoptosis. E6 also inhibits immune response by interacting with host IRF3 and TYK2. These interactions prevent IRF3 transcriptional activities and inhibit TYK2-mediated JAK-STAT activation by interferon alpha resulting in inhibition of the interferon signaling pathway.</text>
</comment>
<comment type="subunit">
    <text evidence="1">Forms homodimers. Interacts with ubiquitin-protein ligase UBE3A/E6-AP and thus forms a complex with human TP53. Interacts with human NFX1 and MAGI3. Interacts with human IRF3; this interaction inhibits the establishment of antiviral state. Interacts with human TYK2; this interaction inhibits JAK-STAT activation by interferon alpha. Interacts with host DLG1; this interaction leads to the proteasomal degradation of DLG1.</text>
</comment>
<comment type="subcellular location">
    <subcellularLocation>
        <location evidence="1">Host cytoplasm</location>
    </subcellularLocation>
    <subcellularLocation>
        <location evidence="1">Host nucleus</location>
    </subcellularLocation>
</comment>
<comment type="miscellaneous">
    <text evidence="1">Belongs to the high risk human alphapapillomavirus family. The cancer-causing human papillomavirus E6 protein has a unique carboxy terminal PDZ domain containing substrate.</text>
</comment>
<comment type="similarity">
    <text evidence="2">Belongs to the papillomaviridae E6 protein family.</text>
</comment>